<feature type="chain" id="PRO_1000031238" description="Ribonuclease HIII">
    <location>
        <begin position="1"/>
        <end position="310"/>
    </location>
</feature>
<feature type="domain" description="RNase H type-2" evidence="2">
    <location>
        <begin position="91"/>
        <end position="307"/>
    </location>
</feature>
<feature type="binding site" evidence="1">
    <location>
        <position position="97"/>
    </location>
    <ligand>
        <name>a divalent metal cation</name>
        <dbReference type="ChEBI" id="CHEBI:60240"/>
    </ligand>
</feature>
<feature type="binding site" evidence="1">
    <location>
        <position position="98"/>
    </location>
    <ligand>
        <name>a divalent metal cation</name>
        <dbReference type="ChEBI" id="CHEBI:60240"/>
    </ligand>
</feature>
<feature type="binding site" evidence="1">
    <location>
        <position position="202"/>
    </location>
    <ligand>
        <name>a divalent metal cation</name>
        <dbReference type="ChEBI" id="CHEBI:60240"/>
    </ligand>
</feature>
<gene>
    <name evidence="1" type="primary">rnhC</name>
    <name type="ordered locus">SH1821</name>
</gene>
<proteinExistence type="inferred from homology"/>
<sequence length="310" mass="34775">MANIVYKLSESEIQHLLQQITFETSQLSPGMKARTKYKQSVINIYNSGKVMFQGKNAEAVAQQLLPDHTTTSKNSSSSNQSSGETLAYNHYNCIGSDEAGSGDYFGPLTVCAAYVSKENVKILKTLGVDDSKKLNDQKIIELAEQLITFIPHSLLTLDNPKYNDRQAIGWSQVKMKAELHNEAIKNVTQKINCNELNYIVIDQFAVRGVYQRYALSSLPYPEKTKFETKGESKSLAIAAASIISRYAFVKHMDHISHKMKQDIPKGASNKVDLIAAQIIDKHGIETLDLISKKHFKNREKAQNLVTKKYK</sequence>
<evidence type="ECO:0000255" key="1">
    <source>
        <dbReference type="HAMAP-Rule" id="MF_00053"/>
    </source>
</evidence>
<evidence type="ECO:0000255" key="2">
    <source>
        <dbReference type="PROSITE-ProRule" id="PRU01319"/>
    </source>
</evidence>
<protein>
    <recommendedName>
        <fullName evidence="1">Ribonuclease HIII</fullName>
        <shortName evidence="1">RNase HIII</shortName>
        <ecNumber evidence="1">3.1.26.4</ecNumber>
    </recommendedName>
</protein>
<comment type="function">
    <text evidence="1">Endonuclease that specifically degrades the RNA of RNA-DNA hybrids.</text>
</comment>
<comment type="catalytic activity">
    <reaction evidence="1">
        <text>Endonucleolytic cleavage to 5'-phosphomonoester.</text>
        <dbReference type="EC" id="3.1.26.4"/>
    </reaction>
</comment>
<comment type="cofactor">
    <cofactor evidence="1">
        <name>Mn(2+)</name>
        <dbReference type="ChEBI" id="CHEBI:29035"/>
    </cofactor>
    <cofactor evidence="1">
        <name>Mg(2+)</name>
        <dbReference type="ChEBI" id="CHEBI:18420"/>
    </cofactor>
    <text evidence="1">Manganese or magnesium. Binds 1 divalent metal ion per monomer in the absence of substrate. May bind a second metal ion after substrate binding.</text>
</comment>
<comment type="subcellular location">
    <subcellularLocation>
        <location evidence="1">Cytoplasm</location>
    </subcellularLocation>
</comment>
<comment type="similarity">
    <text evidence="1">Belongs to the RNase HII family. RnhC subfamily.</text>
</comment>
<accession>Q4L5E5</accession>
<keyword id="KW-0963">Cytoplasm</keyword>
<keyword id="KW-0255">Endonuclease</keyword>
<keyword id="KW-0378">Hydrolase</keyword>
<keyword id="KW-0460">Magnesium</keyword>
<keyword id="KW-0479">Metal-binding</keyword>
<keyword id="KW-0540">Nuclease</keyword>
<dbReference type="EC" id="3.1.26.4" evidence="1"/>
<dbReference type="EMBL" id="AP006716">
    <property type="protein sequence ID" value="BAE05130.1"/>
    <property type="molecule type" value="Genomic_DNA"/>
</dbReference>
<dbReference type="RefSeq" id="WP_011276098.1">
    <property type="nucleotide sequence ID" value="NC_007168.1"/>
</dbReference>
<dbReference type="SMR" id="Q4L5E5"/>
<dbReference type="GeneID" id="93781189"/>
<dbReference type="KEGG" id="sha:SH1821"/>
<dbReference type="eggNOG" id="COG1039">
    <property type="taxonomic scope" value="Bacteria"/>
</dbReference>
<dbReference type="HOGENOM" id="CLU_059546_1_0_9"/>
<dbReference type="OrthoDB" id="9777935at2"/>
<dbReference type="Proteomes" id="UP000000543">
    <property type="component" value="Chromosome"/>
</dbReference>
<dbReference type="GO" id="GO:0005737">
    <property type="term" value="C:cytoplasm"/>
    <property type="evidence" value="ECO:0007669"/>
    <property type="project" value="UniProtKB-SubCell"/>
</dbReference>
<dbReference type="GO" id="GO:0032299">
    <property type="term" value="C:ribonuclease H2 complex"/>
    <property type="evidence" value="ECO:0007669"/>
    <property type="project" value="TreeGrafter"/>
</dbReference>
<dbReference type="GO" id="GO:0000287">
    <property type="term" value="F:magnesium ion binding"/>
    <property type="evidence" value="ECO:0007669"/>
    <property type="project" value="UniProtKB-UniRule"/>
</dbReference>
<dbReference type="GO" id="GO:0003723">
    <property type="term" value="F:RNA binding"/>
    <property type="evidence" value="ECO:0007669"/>
    <property type="project" value="InterPro"/>
</dbReference>
<dbReference type="GO" id="GO:0004523">
    <property type="term" value="F:RNA-DNA hybrid ribonuclease activity"/>
    <property type="evidence" value="ECO:0007669"/>
    <property type="project" value="UniProtKB-UniRule"/>
</dbReference>
<dbReference type="GO" id="GO:0043137">
    <property type="term" value="P:DNA replication, removal of RNA primer"/>
    <property type="evidence" value="ECO:0007669"/>
    <property type="project" value="TreeGrafter"/>
</dbReference>
<dbReference type="GO" id="GO:0006298">
    <property type="term" value="P:mismatch repair"/>
    <property type="evidence" value="ECO:0007669"/>
    <property type="project" value="TreeGrafter"/>
</dbReference>
<dbReference type="CDD" id="cd06590">
    <property type="entry name" value="RNase_HII_bacteria_HIII_like"/>
    <property type="match status" value="1"/>
</dbReference>
<dbReference type="CDD" id="cd14796">
    <property type="entry name" value="RNAse_HIII_N"/>
    <property type="match status" value="1"/>
</dbReference>
<dbReference type="FunFam" id="3.30.420.10:FF:000047">
    <property type="entry name" value="Ribonuclease HIII"/>
    <property type="match status" value="1"/>
</dbReference>
<dbReference type="Gene3D" id="3.30.420.10">
    <property type="entry name" value="Ribonuclease H-like superfamily/Ribonuclease H"/>
    <property type="match status" value="1"/>
</dbReference>
<dbReference type="Gene3D" id="3.30.310.10">
    <property type="entry name" value="TATA-Binding Protein"/>
    <property type="match status" value="1"/>
</dbReference>
<dbReference type="HAMAP" id="MF_00053">
    <property type="entry name" value="RNase_HIII"/>
    <property type="match status" value="1"/>
</dbReference>
<dbReference type="InterPro" id="IPR001352">
    <property type="entry name" value="RNase_HII/HIII"/>
</dbReference>
<dbReference type="InterPro" id="IPR024567">
    <property type="entry name" value="RNase_HII/HIII_dom"/>
</dbReference>
<dbReference type="InterPro" id="IPR004641">
    <property type="entry name" value="RNase_HIII"/>
</dbReference>
<dbReference type="InterPro" id="IPR024568">
    <property type="entry name" value="RNase_HIII_N"/>
</dbReference>
<dbReference type="InterPro" id="IPR012337">
    <property type="entry name" value="RNaseH-like_sf"/>
</dbReference>
<dbReference type="InterPro" id="IPR036397">
    <property type="entry name" value="RNaseH_sf"/>
</dbReference>
<dbReference type="InterPro" id="IPR012295">
    <property type="entry name" value="TBP_dom_sf"/>
</dbReference>
<dbReference type="NCBIfam" id="TIGR00716">
    <property type="entry name" value="rnhC"/>
    <property type="match status" value="1"/>
</dbReference>
<dbReference type="PANTHER" id="PTHR10954:SF23">
    <property type="entry name" value="RIBONUCLEASE"/>
    <property type="match status" value="1"/>
</dbReference>
<dbReference type="PANTHER" id="PTHR10954">
    <property type="entry name" value="RIBONUCLEASE H2 SUBUNIT A"/>
    <property type="match status" value="1"/>
</dbReference>
<dbReference type="Pfam" id="PF11858">
    <property type="entry name" value="DUF3378"/>
    <property type="match status" value="1"/>
</dbReference>
<dbReference type="Pfam" id="PF01351">
    <property type="entry name" value="RNase_HII"/>
    <property type="match status" value="1"/>
</dbReference>
<dbReference type="PIRSF" id="PIRSF037748">
    <property type="entry name" value="RnhC"/>
    <property type="match status" value="1"/>
</dbReference>
<dbReference type="SUPFAM" id="SSF53098">
    <property type="entry name" value="Ribonuclease H-like"/>
    <property type="match status" value="1"/>
</dbReference>
<dbReference type="PROSITE" id="PS51975">
    <property type="entry name" value="RNASE_H_2"/>
    <property type="match status" value="1"/>
</dbReference>
<reference key="1">
    <citation type="journal article" date="2005" name="J. Bacteriol.">
        <title>Whole-genome sequencing of Staphylococcus haemolyticus uncovers the extreme plasticity of its genome and the evolution of human-colonizing staphylococcal species.</title>
        <authorList>
            <person name="Takeuchi F."/>
            <person name="Watanabe S."/>
            <person name="Baba T."/>
            <person name="Yuzawa H."/>
            <person name="Ito T."/>
            <person name="Morimoto Y."/>
            <person name="Kuroda M."/>
            <person name="Cui L."/>
            <person name="Takahashi M."/>
            <person name="Ankai A."/>
            <person name="Baba S."/>
            <person name="Fukui S."/>
            <person name="Lee J.C."/>
            <person name="Hiramatsu K."/>
        </authorList>
    </citation>
    <scope>NUCLEOTIDE SEQUENCE [LARGE SCALE GENOMIC DNA]</scope>
    <source>
        <strain>JCSC1435</strain>
    </source>
</reference>
<organism>
    <name type="scientific">Staphylococcus haemolyticus (strain JCSC1435)</name>
    <dbReference type="NCBI Taxonomy" id="279808"/>
    <lineage>
        <taxon>Bacteria</taxon>
        <taxon>Bacillati</taxon>
        <taxon>Bacillota</taxon>
        <taxon>Bacilli</taxon>
        <taxon>Bacillales</taxon>
        <taxon>Staphylococcaceae</taxon>
        <taxon>Staphylococcus</taxon>
    </lineage>
</organism>
<name>RNH3_STAHJ</name>